<evidence type="ECO:0000250" key="1">
    <source>
        <dbReference type="UniProtKB" id="P08937"/>
    </source>
</evidence>
<evidence type="ECO:0000269" key="2">
    <source>
    </source>
</evidence>
<evidence type="ECO:0000269" key="3">
    <source>
    </source>
</evidence>
<evidence type="ECO:0000303" key="4">
    <source>
    </source>
</evidence>
<evidence type="ECO:0000303" key="5">
    <source>
    </source>
</evidence>
<evidence type="ECO:0000305" key="6"/>
<evidence type="ECO:0000305" key="7">
    <source>
    </source>
</evidence>
<evidence type="ECO:0000305" key="8">
    <source>
    </source>
</evidence>
<evidence type="ECO:0000312" key="9">
    <source>
        <dbReference type="EMBL" id="CAX62129.1"/>
    </source>
</evidence>
<evidence type="ECO:0000312" key="10">
    <source>
        <dbReference type="Proteomes" id="UP000005447"/>
    </source>
</evidence>
<keyword id="KW-0020">Allergen</keyword>
<keyword id="KW-0903">Direct protein sequencing</keyword>
<keyword id="KW-1015">Disulfide bond</keyword>
<keyword id="KW-1185">Reference proteome</keyword>
<keyword id="KW-0964">Secreted</keyword>
<keyword id="KW-0732">Signal</keyword>
<proteinExistence type="evidence at protein level"/>
<dbReference type="EMBL" id="FN256284">
    <property type="protein sequence ID" value="CAX62129.1"/>
    <property type="molecule type" value="mRNA"/>
</dbReference>
<dbReference type="EMBL" id="AAKN02052698">
    <property type="status" value="NOT_ANNOTATED_CDS"/>
    <property type="molecule type" value="Genomic_DNA"/>
</dbReference>
<dbReference type="RefSeq" id="NP_001192113.1">
    <property type="nucleotide sequence ID" value="NM_001205184.1"/>
</dbReference>
<dbReference type="SMR" id="P83508"/>
<dbReference type="Allergome" id="3183">
    <property type="allergen name" value="Cav p 2.0101"/>
</dbReference>
<dbReference type="Allergome" id="618">
    <property type="allergen name" value="Cav p 2"/>
</dbReference>
<dbReference type="Ensembl" id="ENSCPOT00000035307.1">
    <property type="protein sequence ID" value="ENSCPOP00000025189.1"/>
    <property type="gene ID" value="ENSCPOG00000037628.1"/>
</dbReference>
<dbReference type="GeneID" id="100534654"/>
<dbReference type="KEGG" id="cpoc:100534654"/>
<dbReference type="CTD" id="100534654"/>
<dbReference type="VEuPathDB" id="HostDB:ENSCPOG00000037628"/>
<dbReference type="GeneTree" id="ENSGT01050000244868"/>
<dbReference type="InParanoid" id="P83508"/>
<dbReference type="OMA" id="DCTEGCD"/>
<dbReference type="OrthoDB" id="9630146at2759"/>
<dbReference type="Proteomes" id="UP000005447">
    <property type="component" value="Unassembled WGS sequence"/>
</dbReference>
<dbReference type="GO" id="GO:0005615">
    <property type="term" value="C:extracellular space"/>
    <property type="evidence" value="ECO:0000314"/>
    <property type="project" value="UniProtKB"/>
</dbReference>
<dbReference type="GO" id="GO:0005549">
    <property type="term" value="F:odorant binding"/>
    <property type="evidence" value="ECO:0007669"/>
    <property type="project" value="TreeGrafter"/>
</dbReference>
<dbReference type="GO" id="GO:0036094">
    <property type="term" value="F:small molecule binding"/>
    <property type="evidence" value="ECO:0007669"/>
    <property type="project" value="InterPro"/>
</dbReference>
<dbReference type="CDD" id="cd19427">
    <property type="entry name" value="lipocalin_OBP-like"/>
    <property type="match status" value="1"/>
</dbReference>
<dbReference type="Gene3D" id="2.40.128.20">
    <property type="match status" value="1"/>
</dbReference>
<dbReference type="InterPro" id="IPR012674">
    <property type="entry name" value="Calycin"/>
</dbReference>
<dbReference type="InterPro" id="IPR002345">
    <property type="entry name" value="Lipocalin"/>
</dbReference>
<dbReference type="InterPro" id="IPR000566">
    <property type="entry name" value="Lipocln_cytosolic_FA-bd_dom"/>
</dbReference>
<dbReference type="InterPro" id="IPR002448">
    <property type="entry name" value="OBP-like"/>
</dbReference>
<dbReference type="PANTHER" id="PTHR11430">
    <property type="entry name" value="LIPOCALIN"/>
    <property type="match status" value="1"/>
</dbReference>
<dbReference type="PANTHER" id="PTHR11430:SF65">
    <property type="entry name" value="ODORANT-BINDING PROTEIN 1A-RELATED"/>
    <property type="match status" value="1"/>
</dbReference>
<dbReference type="Pfam" id="PF00061">
    <property type="entry name" value="Lipocalin"/>
    <property type="match status" value="1"/>
</dbReference>
<dbReference type="PRINTS" id="PR01173">
    <property type="entry name" value="ODORANTBNDNG"/>
</dbReference>
<dbReference type="SUPFAM" id="SSF50814">
    <property type="entry name" value="Lipocalins"/>
    <property type="match status" value="1"/>
</dbReference>
<organism evidence="6">
    <name type="scientific">Cavia porcellus</name>
    <name type="common">Guinea pig</name>
    <dbReference type="NCBI Taxonomy" id="10141"/>
    <lineage>
        <taxon>Eukaryota</taxon>
        <taxon>Metazoa</taxon>
        <taxon>Chordata</taxon>
        <taxon>Craniata</taxon>
        <taxon>Vertebrata</taxon>
        <taxon>Euteleostomi</taxon>
        <taxon>Mammalia</taxon>
        <taxon>Eutheria</taxon>
        <taxon>Euarchontoglires</taxon>
        <taxon>Glires</taxon>
        <taxon>Rodentia</taxon>
        <taxon>Hystricomorpha</taxon>
        <taxon>Caviidae</taxon>
        <taxon>Cavia</taxon>
    </lineage>
</organism>
<feature type="signal peptide" evidence="2 3">
    <location>
        <begin position="1"/>
        <end position="16"/>
    </location>
</feature>
<feature type="chain" id="PRO_0000201031" description="Lipocalin Cav p 2.0101" evidence="7 8">
    <location>
        <begin position="17"/>
        <end position="170"/>
    </location>
</feature>
<feature type="disulfide bond" evidence="1">
    <location>
        <begin position="56"/>
        <end position="60"/>
    </location>
</feature>
<feature type="disulfide bond" evidence="1">
    <location>
        <begin position="75"/>
        <end position="168"/>
    </location>
</feature>
<reference evidence="9" key="1">
    <citation type="journal article" date="2011" name="Clin. Exp. Allergy">
        <title>Evaluation of two new recombinant guinea-pig lipocalins, Cav p 2 and Cav p 3, in the diagnosis of guinea-pig allergy.</title>
        <authorList>
            <person name="Hilger C."/>
            <person name="Swiontek K."/>
            <person name="Kler S."/>
            <person name="Diederich C."/>
            <person name="Lehners C."/>
            <person name="Vogel L."/>
            <person name="Vieths S."/>
            <person name="Hentges F."/>
        </authorList>
    </citation>
    <scope>NUCLEOTIDE SEQUENCE [MRNA]</scope>
    <scope>PROTEIN SEQUENCE OF 17-31</scope>
    <scope>TISSUE SPECIFICITY</scope>
    <scope>PTM</scope>
    <scope>ALLERGEN</scope>
    <source>
        <strain evidence="5 9">Dunkin-Hartley</strain>
        <tissue evidence="5">Submandibular gland</tissue>
    </source>
</reference>
<reference evidence="10" key="2">
    <citation type="journal article" date="2011" name="Nature">
        <title>A high-resolution map of human evolutionary constraint using 29 mammals.</title>
        <authorList>
            <person name="Lindblad-Toh K."/>
            <person name="Garber M."/>
            <person name="Zuk O."/>
            <person name="Lin M.F."/>
            <person name="Parker B.J."/>
            <person name="Washietl S."/>
            <person name="Kheradpour P."/>
            <person name="Ernst J."/>
            <person name="Jordan G."/>
            <person name="Mauceli E."/>
            <person name="Ward L.D."/>
            <person name="Lowe C.B."/>
            <person name="Holloway A.K."/>
            <person name="Clamp M."/>
            <person name="Gnerre S."/>
            <person name="Alfoldi J."/>
            <person name="Beal K."/>
            <person name="Chang J."/>
            <person name="Clawson H."/>
            <person name="Cuff J."/>
            <person name="Di Palma F."/>
            <person name="Fitzgerald S."/>
            <person name="Flicek P."/>
            <person name="Guttman M."/>
            <person name="Hubisz M.J."/>
            <person name="Jaffe D.B."/>
            <person name="Jungreis I."/>
            <person name="Kent W.J."/>
            <person name="Kostka D."/>
            <person name="Lara M."/>
            <person name="Martins A.L."/>
            <person name="Massingham T."/>
            <person name="Moltke I."/>
            <person name="Raney B.J."/>
            <person name="Rasmussen M.D."/>
            <person name="Robinson J."/>
            <person name="Stark A."/>
            <person name="Vilella A.J."/>
            <person name="Wen J."/>
            <person name="Xie X."/>
            <person name="Zody M.C."/>
            <person name="Baldwin J."/>
            <person name="Bloom T."/>
            <person name="Chin C.W."/>
            <person name="Heiman D."/>
            <person name="Nicol R."/>
            <person name="Nusbaum C."/>
            <person name="Young S."/>
            <person name="Wilkinson J."/>
            <person name="Worley K.C."/>
            <person name="Kovar C.L."/>
            <person name="Muzny D.M."/>
            <person name="Gibbs R.A."/>
            <person name="Cree A."/>
            <person name="Dihn H.H."/>
            <person name="Fowler G."/>
            <person name="Jhangiani S."/>
            <person name="Joshi V."/>
            <person name="Lee S."/>
            <person name="Lewis L.R."/>
            <person name="Nazareth L.V."/>
            <person name="Okwuonu G."/>
            <person name="Santibanez J."/>
            <person name="Warren W.C."/>
            <person name="Mardis E.R."/>
            <person name="Weinstock G.M."/>
            <person name="Wilson R.K."/>
            <person name="Delehaunty K."/>
            <person name="Dooling D."/>
            <person name="Fronik C."/>
            <person name="Fulton L."/>
            <person name="Fulton B."/>
            <person name="Graves T."/>
            <person name="Minx P."/>
            <person name="Sodergren E."/>
            <person name="Birney E."/>
            <person name="Margulies E.H."/>
            <person name="Herrero J."/>
            <person name="Green E.D."/>
            <person name="Haussler D."/>
            <person name="Siepel A."/>
            <person name="Goldman N."/>
            <person name="Pollard K.S."/>
            <person name="Pedersen J.S."/>
            <person name="Lander E.S."/>
            <person name="Kellis M."/>
        </authorList>
    </citation>
    <scope>NUCLEOTIDE SEQUENCE [LARGE SCALE GENOMIC DNA]</scope>
    <source>
        <strain evidence="10">2N</strain>
    </source>
</reference>
<reference key="3">
    <citation type="journal article" date="2003" name="Allergy">
        <title>Further characterization of IgE-binding antigens from guinea pig hair as new members of the lipocalin family.</title>
        <authorList>
            <person name="Fahlbusch B."/>
            <person name="Rudeschko O."/>
            <person name="Schlott B."/>
            <person name="Henzgen M."/>
            <person name="Schlenvoigt G."/>
            <person name="Schubert H."/>
            <person name="Kinne R.W."/>
        </authorList>
    </citation>
    <scope>PROTEIN SEQUENCE OF 17-31</scope>
    <scope>TISSUE SPECIFICITY</scope>
    <scope>ALLERGEN</scope>
    <source>
        <tissue evidence="4">Hair</tissue>
    </source>
</reference>
<name>AVP2_CAVPO</name>
<accession>P83508</accession>
<accession>F0UZ11</accession>
<protein>
    <recommendedName>
        <fullName evidence="5">Lipocalin Cav p 2.0101</fullName>
    </recommendedName>
    <alternativeName>
        <fullName evidence="4">Major allergen Cav p 2</fullName>
    </alternativeName>
    <allergenName evidence="5">Cav p 2.0101</allergenName>
</protein>
<gene>
    <name type="primary">Lcncavp2</name>
</gene>
<sequence>MMQILLLALAVSLACADSIDYSKVPGNWRTIAIAADHVEKIEVNGELRAYFRQVDCTEGCDKISITFYTNTDGVCTEHTVVGARNGENDVYTVDYAGENTFQILCNSDDAFVIGSVNTDQNGQTTKEVAIAAKRNFLTPEQEQKFQKAVQNAGIPLENIRYVIETDTCPD</sequence>
<comment type="subcellular location">
    <subcellularLocation>
        <location evidence="7 8">Secreted</location>
    </subcellularLocation>
</comment>
<comment type="tissue specificity">
    <text evidence="2 3">Expressed in harderian gland (at protein level) (PubMed:21518038). Expressed in hair (at protein level) (PubMed:12823123, PubMed:21518038). Expressed in submaxillary gland and harderian gland (PubMed:21518038).</text>
</comment>
<comment type="PTM">
    <text evidence="3">Not N-linked glycosylated.</text>
</comment>
<comment type="allergen">
    <text evidence="2 3">Causes an allergic reaction in human. Binds to IgE (PubMed:12823123, PubMed:21518038). Binds to IgE in 65% of the 26 patients tested allergic to guinea pigs (PubMed:21518038). Is a cause of guinea pig hair allergy (PubMed:12823123). Causes degranulation of humanized rat basophil leukemia cells (RBL) and release of beta-hexosaminidase (PubMed:21518038).</text>
</comment>
<comment type="similarity">
    <text evidence="6">Belongs to the calycin superfamily. Lipocalin family.</text>
</comment>